<feature type="chain" id="PRO_0000048753" description="Transcription factor Sox-11-A">
    <location>
        <begin position="1"/>
        <end position="382"/>
    </location>
</feature>
<feature type="DNA-binding region" description="HMG box" evidence="2">
    <location>
        <begin position="47"/>
        <end position="115"/>
    </location>
</feature>
<feature type="region of interest" description="Disordered" evidence="3">
    <location>
        <begin position="1"/>
        <end position="24"/>
    </location>
</feature>
<feature type="region of interest" description="Disordered" evidence="3">
    <location>
        <begin position="114"/>
        <end position="170"/>
    </location>
</feature>
<feature type="compositionally biased region" description="Basic and acidic residues" evidence="3">
    <location>
        <begin position="1"/>
        <end position="11"/>
    </location>
</feature>
<feature type="compositionally biased region" description="Polar residues" evidence="3">
    <location>
        <begin position="127"/>
        <end position="140"/>
    </location>
</feature>
<feature type="compositionally biased region" description="Basic residues" evidence="3">
    <location>
        <begin position="147"/>
        <end position="157"/>
    </location>
</feature>
<feature type="compositionally biased region" description="Low complexity" evidence="3">
    <location>
        <begin position="158"/>
        <end position="170"/>
    </location>
</feature>
<feature type="sequence conflict" description="In Ref. 2; BAA22778." evidence="8" ref="2">
    <original>S</original>
    <variation>P</variation>
    <location>
        <position position="31"/>
    </location>
</feature>
<feature type="sequence conflict" description="In Ref. 1; BAA13006." evidence="8" ref="1">
    <original>R</original>
    <variation>E</variation>
    <location>
        <position position="98"/>
    </location>
</feature>
<feature type="sequence conflict" description="In Ref. 2; BAA22778." evidence="8" ref="2">
    <original>A</original>
    <variation>G</variation>
    <location>
        <position position="304"/>
    </location>
</feature>
<name>SX11A_XENLA</name>
<evidence type="ECO:0000250" key="1">
    <source>
        <dbReference type="UniProtKB" id="Q7M6Y2"/>
    </source>
</evidence>
<evidence type="ECO:0000255" key="2">
    <source>
        <dbReference type="PROSITE-ProRule" id="PRU00267"/>
    </source>
</evidence>
<evidence type="ECO:0000256" key="3">
    <source>
        <dbReference type="SAM" id="MobiDB-lite"/>
    </source>
</evidence>
<evidence type="ECO:0000269" key="4">
    <source>
    </source>
</evidence>
<evidence type="ECO:0000269" key="5">
    <source>
    </source>
</evidence>
<evidence type="ECO:0000269" key="6">
    <source>
    </source>
</evidence>
<evidence type="ECO:0000269" key="7">
    <source>
    </source>
</evidence>
<evidence type="ECO:0000305" key="8"/>
<dbReference type="EMBL" id="D86076">
    <property type="protein sequence ID" value="BAA13006.1"/>
    <property type="molecule type" value="mRNA"/>
</dbReference>
<dbReference type="EMBL" id="D83650">
    <property type="protein sequence ID" value="BAA22778.1"/>
    <property type="molecule type" value="mRNA"/>
</dbReference>
<dbReference type="PIR" id="S72169">
    <property type="entry name" value="S72169"/>
</dbReference>
<dbReference type="RefSeq" id="NP_001135834.1">
    <property type="nucleotide sequence ID" value="NM_001142362.1"/>
</dbReference>
<dbReference type="SMR" id="Q91731"/>
<dbReference type="GeneID" id="100216330"/>
<dbReference type="KEGG" id="xla:100216330"/>
<dbReference type="AGR" id="Xenbase:XB-GENE-6252061"/>
<dbReference type="CTD" id="100216330"/>
<dbReference type="Xenbase" id="XB-GENE-6252061">
    <property type="gene designation" value="sox11.L"/>
</dbReference>
<dbReference type="OrthoDB" id="6247875at2759"/>
<dbReference type="Proteomes" id="UP000186698">
    <property type="component" value="Chromosome 5L"/>
</dbReference>
<dbReference type="Bgee" id="100216330">
    <property type="expression patterns" value="Expressed in gastrula and 17 other cell types or tissues"/>
</dbReference>
<dbReference type="GO" id="GO:0005634">
    <property type="term" value="C:nucleus"/>
    <property type="evidence" value="ECO:0000318"/>
    <property type="project" value="GO_Central"/>
</dbReference>
<dbReference type="GO" id="GO:0001228">
    <property type="term" value="F:DNA-binding transcription activator activity, RNA polymerase II-specific"/>
    <property type="evidence" value="ECO:0000318"/>
    <property type="project" value="GO_Central"/>
</dbReference>
<dbReference type="GO" id="GO:0000978">
    <property type="term" value="F:RNA polymerase II cis-regulatory region sequence-specific DNA binding"/>
    <property type="evidence" value="ECO:0000318"/>
    <property type="project" value="GO_Central"/>
</dbReference>
<dbReference type="GO" id="GO:0043565">
    <property type="term" value="F:sequence-specific DNA binding"/>
    <property type="evidence" value="ECO:0000314"/>
    <property type="project" value="UniProtKB"/>
</dbReference>
<dbReference type="GO" id="GO:0007420">
    <property type="term" value="P:brain development"/>
    <property type="evidence" value="ECO:0000318"/>
    <property type="project" value="GO_Central"/>
</dbReference>
<dbReference type="GO" id="GO:0048593">
    <property type="term" value="P:camera-type eye morphogenesis"/>
    <property type="evidence" value="ECO:0000318"/>
    <property type="project" value="GO_Central"/>
</dbReference>
<dbReference type="GO" id="GO:0000122">
    <property type="term" value="P:negative regulation of transcription by RNA polymerase II"/>
    <property type="evidence" value="ECO:0000318"/>
    <property type="project" value="GO_Central"/>
</dbReference>
<dbReference type="GO" id="GO:0007399">
    <property type="term" value="P:nervous system development"/>
    <property type="evidence" value="ECO:0000315"/>
    <property type="project" value="UniProtKB"/>
</dbReference>
<dbReference type="GO" id="GO:0030182">
    <property type="term" value="P:neuron differentiation"/>
    <property type="evidence" value="ECO:0000318"/>
    <property type="project" value="GO_Central"/>
</dbReference>
<dbReference type="GO" id="GO:0045944">
    <property type="term" value="P:positive regulation of transcription by RNA polymerase II"/>
    <property type="evidence" value="ECO:0000318"/>
    <property type="project" value="GO_Central"/>
</dbReference>
<dbReference type="CDD" id="cd22029">
    <property type="entry name" value="HMG-box_SoxC"/>
    <property type="match status" value="1"/>
</dbReference>
<dbReference type="FunFam" id="1.10.30.10:FF:000007">
    <property type="entry name" value="Transcription factor SOX"/>
    <property type="match status" value="1"/>
</dbReference>
<dbReference type="Gene3D" id="1.10.30.10">
    <property type="entry name" value="High mobility group box domain"/>
    <property type="match status" value="1"/>
</dbReference>
<dbReference type="InterPro" id="IPR009071">
    <property type="entry name" value="HMG_box_dom"/>
</dbReference>
<dbReference type="InterPro" id="IPR036910">
    <property type="entry name" value="HMG_box_dom_sf"/>
</dbReference>
<dbReference type="InterPro" id="IPR017386">
    <property type="entry name" value="SOX-12/11/4"/>
</dbReference>
<dbReference type="InterPro" id="IPR050140">
    <property type="entry name" value="SRY-related_HMG-box_TF-like"/>
</dbReference>
<dbReference type="PANTHER" id="PTHR10270">
    <property type="entry name" value="SOX TRANSCRIPTION FACTOR"/>
    <property type="match status" value="1"/>
</dbReference>
<dbReference type="PANTHER" id="PTHR10270:SF113">
    <property type="entry name" value="TRANSCRIPTION FACTOR SOX-11"/>
    <property type="match status" value="1"/>
</dbReference>
<dbReference type="Pfam" id="PF00505">
    <property type="entry name" value="HMG_box"/>
    <property type="match status" value="1"/>
</dbReference>
<dbReference type="PIRSF" id="PIRSF038098">
    <property type="entry name" value="SOX-12/11/4a"/>
    <property type="match status" value="1"/>
</dbReference>
<dbReference type="SMART" id="SM00398">
    <property type="entry name" value="HMG"/>
    <property type="match status" value="1"/>
</dbReference>
<dbReference type="SUPFAM" id="SSF47095">
    <property type="entry name" value="HMG-box"/>
    <property type="match status" value="1"/>
</dbReference>
<dbReference type="PROSITE" id="PS50118">
    <property type="entry name" value="HMG_BOX_2"/>
    <property type="match status" value="1"/>
</dbReference>
<keyword id="KW-0010">Activator</keyword>
<keyword id="KW-0217">Developmental protein</keyword>
<keyword id="KW-0221">Differentiation</keyword>
<keyword id="KW-0238">DNA-binding</keyword>
<keyword id="KW-0524">Neurogenesis</keyword>
<keyword id="KW-0539">Nucleus</keyword>
<keyword id="KW-1185">Reference proteome</keyword>
<keyword id="KW-0804">Transcription</keyword>
<keyword id="KW-0805">Transcription regulation</keyword>
<reference key="1">
    <citation type="journal article" date="1996" name="Biochim. Biophys. Acta">
        <title>SRY-related genes in Xenopus oocytes.</title>
        <authorList>
            <person name="Miyata S."/>
            <person name="Miyashita K."/>
            <person name="Hosoyama Y."/>
        </authorList>
    </citation>
    <scope>NUCLEOTIDE SEQUENCE [MRNA]</scope>
    <scope>TISSUE SPECIFICITY</scope>
    <source>
        <tissue>Oocyte</tissue>
    </source>
</reference>
<reference key="2">
    <citation type="journal article" date="1997" name="Gene">
        <title>XLS13A and XLS13B: SRY-related genes of Xenopus laevis.</title>
        <authorList>
            <person name="Hiraoka Y."/>
            <person name="Komatsu N."/>
            <person name="Sakai Y."/>
            <person name="Ogawa M."/>
            <person name="Shiozawa M."/>
            <person name="Aiso S."/>
        </authorList>
    </citation>
    <scope>NUCLEOTIDE SEQUENCE [MRNA]</scope>
    <scope>FUNCTION</scope>
    <scope>TISSUE SPECIFICITY</scope>
    <scope>DEVELOPMENTAL STAGE</scope>
    <source>
        <tissue>Ovary</tissue>
    </source>
</reference>
<reference key="3">
    <citation type="journal article" date="2002" name="Genes Cells">
        <title>Involvement of NLK and Sox11 in neural induction in Xenopus development.</title>
        <authorList>
            <person name="Hyodo-Miura J."/>
            <person name="Urushiyama S."/>
            <person name="Nagai S."/>
            <person name="Nishita M."/>
            <person name="Ueno N."/>
            <person name="Shibuya H."/>
        </authorList>
    </citation>
    <scope>FUNCTION</scope>
    <scope>INTERACTION WITH NLK.2</scope>
    <scope>TISSUE SPECIFICITY</scope>
    <scope>INDUCTION</scope>
</reference>
<reference key="4">
    <citation type="journal article" date="2016" name="J. Med. Genet.">
        <title>Deletions and de novo mutations of SOX11 are associated with a neurodevelopmental disorder with features of Coffin-Siris syndrome.</title>
        <authorList>
            <consortium name="DDD Collaboration"/>
            <person name="Hempel A."/>
            <person name="Pagnamenta A.T."/>
            <person name="Blyth M."/>
            <person name="Mansour S."/>
            <person name="McConnell V."/>
            <person name="Kou I."/>
            <person name="Ikegawa S."/>
            <person name="Tsurusaki Y."/>
            <person name="Matsumoto N."/>
            <person name="Lo-Castro A."/>
            <person name="Plessis G."/>
            <person name="Albrecht B."/>
            <person name="Battaglia A."/>
            <person name="Taylor J.C."/>
            <person name="Howard M.F."/>
            <person name="Keays D."/>
            <person name="Sohal A.S."/>
            <person name="Kuehl S.J."/>
            <person name="Kini U."/>
            <person name="McNeill A."/>
        </authorList>
    </citation>
    <scope>DISRUPTION PHENOTYPE</scope>
</reference>
<proteinExistence type="evidence at protein level"/>
<sequence>MVQRADMDSSQHTEPSTDTEEGEFMACSPVSLDESDPDWCKTATGHIKRPMNAFMVWSKIERRKIMEQSPDMHNAEISKRLGKRWKMLNDSEKIPFIREAERLRLKHMADYPDYKYRPRKKPKVDPSASSKPPALTQSPEKSPKSRSAGRKCPKLKPSHSGSGSKSLSIKSEYSGGSDEYVFGSPKASGKAAAAAVKCVFMDEDEEEEEEEEDDEEEEDELQIRIKQEEDDEPLRQYNVAKVPASPTLSSSSAESVEGASMYEDIRNGTRLYYNFKNITKQSTIPQATITLAPRPAPTTTSPAASHELLFDLSLNFTQQNPQLPDPNSGNVSLSLVDKDLDSCSEGSLGSHFDFPDYCTPELSEMIAGDWLEANFSDLVFTY</sequence>
<gene>
    <name type="primary">sox11-a</name>
    <name type="synonym">sox11</name>
</gene>
<protein>
    <recommendedName>
        <fullName>Transcription factor Sox-11-A</fullName>
        <shortName>xSox-11</shortName>
    </recommendedName>
    <alternativeName>
        <fullName>XLS13A</fullName>
    </alternativeName>
</protein>
<accession>Q91731</accession>
<accession>Q9PSW8</accession>
<comment type="function">
    <text evidence="1 4 7">Transcription factor that binds to the DNA sequence 5'-AACAAT-3' (PubMed:9332350). Acts as a transcriptional activator (By similarity). Plays a role together with nlk in neural induction during early embryogenesis (PubMed:12047350).</text>
</comment>
<comment type="subunit">
    <text evidence="4">Interacts with nlk.2.</text>
</comment>
<comment type="subcellular location">
    <subcellularLocation>
        <location evidence="2">Nucleus</location>
    </subcellularLocation>
</comment>
<comment type="tissue specificity">
    <text evidence="4 6 7">Expressed in unfertilized eggs but not in early embryos up to stage 13. Localized to the nervous system at the end of neurulation, and restricted to the central nervous system, eye and head neural crest cells by the early tadpole stages. In adults, expressed throughout the ovary, and also in the testis, kidney, brain and small intestine.</text>
</comment>
<comment type="developmental stage">
    <text evidence="7">Expressed both maternally and zygotically.</text>
</comment>
<comment type="induction">
    <text evidence="4">By chrd.</text>
</comment>
<comment type="disruption phenotype">
    <text evidence="5">Morphants show a significant reduction in head area and interpupillary distance compared with controls. Morpholino gene knockdown does not induce an increased death rate.</text>
</comment>
<organism>
    <name type="scientific">Xenopus laevis</name>
    <name type="common">African clawed frog</name>
    <dbReference type="NCBI Taxonomy" id="8355"/>
    <lineage>
        <taxon>Eukaryota</taxon>
        <taxon>Metazoa</taxon>
        <taxon>Chordata</taxon>
        <taxon>Craniata</taxon>
        <taxon>Vertebrata</taxon>
        <taxon>Euteleostomi</taxon>
        <taxon>Amphibia</taxon>
        <taxon>Batrachia</taxon>
        <taxon>Anura</taxon>
        <taxon>Pipoidea</taxon>
        <taxon>Pipidae</taxon>
        <taxon>Xenopodinae</taxon>
        <taxon>Xenopus</taxon>
        <taxon>Xenopus</taxon>
    </lineage>
</organism>